<comment type="function">
    <text>Defense against chitin-containing fungal pathogens.</text>
</comment>
<comment type="catalytic activity">
    <reaction>
        <text>Random endo-hydrolysis of N-acetyl-beta-D-glucosaminide (1-&gt;4)-beta-linkages in chitin and chitodextrins.</text>
        <dbReference type="EC" id="3.2.1.14"/>
    </reaction>
</comment>
<comment type="subcellular location">
    <subcellularLocation>
        <location>Secreted</location>
        <location>Extracellular space</location>
    </subcellularLocation>
</comment>
<comment type="induction">
    <text>By infection with the fungal pathogen Phoma lingam.</text>
</comment>
<comment type="similarity">
    <text evidence="4">Belongs to the glycosyl hydrolase 19 family. Chitinase class I subfamily.</text>
</comment>
<accession>Q06209</accession>
<proteinExistence type="evidence at protein level"/>
<organism>
    <name type="scientific">Brassica napus</name>
    <name type="common">Rape</name>
    <dbReference type="NCBI Taxonomy" id="3708"/>
    <lineage>
        <taxon>Eukaryota</taxon>
        <taxon>Viridiplantae</taxon>
        <taxon>Streptophyta</taxon>
        <taxon>Embryophyta</taxon>
        <taxon>Tracheophyta</taxon>
        <taxon>Spermatophyta</taxon>
        <taxon>Magnoliopsida</taxon>
        <taxon>eudicotyledons</taxon>
        <taxon>Gunneridae</taxon>
        <taxon>Pentapetalae</taxon>
        <taxon>rosids</taxon>
        <taxon>malvids</taxon>
        <taxon>Brassicales</taxon>
        <taxon>Brassicaceae</taxon>
        <taxon>Brassiceae</taxon>
        <taxon>Brassica</taxon>
    </lineage>
</organism>
<dbReference type="EC" id="3.2.1.14"/>
<dbReference type="EMBL" id="X61488">
    <property type="protein sequence ID" value="CAA43708.1"/>
    <property type="molecule type" value="mRNA"/>
</dbReference>
<dbReference type="PIR" id="S25311">
    <property type="entry name" value="S25311"/>
</dbReference>
<dbReference type="RefSeq" id="NP_001302855.1">
    <property type="nucleotide sequence ID" value="NM_001315926.1"/>
</dbReference>
<dbReference type="SMR" id="Q06209"/>
<dbReference type="CAZy" id="CBM18">
    <property type="family name" value="Carbohydrate-Binding Module Family 18"/>
</dbReference>
<dbReference type="CAZy" id="GH19">
    <property type="family name" value="Glycoside Hydrolase Family 19"/>
</dbReference>
<dbReference type="EnsemblPlants" id="CDX83475">
    <property type="protein sequence ID" value="CDX83475"/>
    <property type="gene ID" value="GSBRNA2T00139054001"/>
</dbReference>
<dbReference type="GeneID" id="106388328"/>
<dbReference type="Gramene" id="CDX83475">
    <property type="protein sequence ID" value="CDX83475"/>
    <property type="gene ID" value="GSBRNA2T00139054001"/>
</dbReference>
<dbReference type="KEGG" id="bna:106388328"/>
<dbReference type="OMA" id="VTEYPCA"/>
<dbReference type="OrthoDB" id="5985073at2759"/>
<dbReference type="GO" id="GO:0005576">
    <property type="term" value="C:extracellular region"/>
    <property type="evidence" value="ECO:0007669"/>
    <property type="project" value="UniProtKB-SubCell"/>
</dbReference>
<dbReference type="GO" id="GO:0008061">
    <property type="term" value="F:chitin binding"/>
    <property type="evidence" value="ECO:0007669"/>
    <property type="project" value="UniProtKB-KW"/>
</dbReference>
<dbReference type="GO" id="GO:0008843">
    <property type="term" value="F:endochitinase activity"/>
    <property type="evidence" value="ECO:0007669"/>
    <property type="project" value="UniProtKB-EC"/>
</dbReference>
<dbReference type="GO" id="GO:0016998">
    <property type="term" value="P:cell wall macromolecule catabolic process"/>
    <property type="evidence" value="ECO:0007669"/>
    <property type="project" value="InterPro"/>
</dbReference>
<dbReference type="GO" id="GO:0006032">
    <property type="term" value="P:chitin catabolic process"/>
    <property type="evidence" value="ECO:0007669"/>
    <property type="project" value="UniProtKB-KW"/>
</dbReference>
<dbReference type="GO" id="GO:0006952">
    <property type="term" value="P:defense response"/>
    <property type="evidence" value="ECO:0007669"/>
    <property type="project" value="UniProtKB-KW"/>
</dbReference>
<dbReference type="GO" id="GO:0000272">
    <property type="term" value="P:polysaccharide catabolic process"/>
    <property type="evidence" value="ECO:0007669"/>
    <property type="project" value="UniProtKB-KW"/>
</dbReference>
<dbReference type="CDD" id="cd00325">
    <property type="entry name" value="chitinase_GH19"/>
    <property type="match status" value="1"/>
</dbReference>
<dbReference type="CDD" id="cd00035">
    <property type="entry name" value="ChtBD1"/>
    <property type="match status" value="1"/>
</dbReference>
<dbReference type="FunFam" id="3.30.20.10:FF:000001">
    <property type="entry name" value="Endochitinase (Chitinase)"/>
    <property type="match status" value="1"/>
</dbReference>
<dbReference type="FunFam" id="3.30.60.10:FF:000004">
    <property type="entry name" value="Endochitinase At2g43590"/>
    <property type="match status" value="1"/>
</dbReference>
<dbReference type="Gene3D" id="1.10.530.10">
    <property type="match status" value="1"/>
</dbReference>
<dbReference type="Gene3D" id="3.30.20.10">
    <property type="entry name" value="Endochitinase, domain 2"/>
    <property type="match status" value="1"/>
</dbReference>
<dbReference type="Gene3D" id="3.30.60.10">
    <property type="entry name" value="Endochitinase-like"/>
    <property type="match status" value="1"/>
</dbReference>
<dbReference type="InterPro" id="IPR001002">
    <property type="entry name" value="Chitin-bd_1"/>
</dbReference>
<dbReference type="InterPro" id="IPR018371">
    <property type="entry name" value="Chitin-binding_1_CS"/>
</dbReference>
<dbReference type="InterPro" id="IPR036861">
    <property type="entry name" value="Endochitinase-like_sf"/>
</dbReference>
<dbReference type="InterPro" id="IPR016283">
    <property type="entry name" value="Glyco_hydro_19"/>
</dbReference>
<dbReference type="InterPro" id="IPR000726">
    <property type="entry name" value="Glyco_hydro_19_cat"/>
</dbReference>
<dbReference type="InterPro" id="IPR023346">
    <property type="entry name" value="Lysozyme-like_dom_sf"/>
</dbReference>
<dbReference type="PANTHER" id="PTHR22595:SF194">
    <property type="entry name" value="CHITINASE FAMILY PROTEIN"/>
    <property type="match status" value="1"/>
</dbReference>
<dbReference type="PANTHER" id="PTHR22595">
    <property type="entry name" value="CHITINASE-RELATED"/>
    <property type="match status" value="1"/>
</dbReference>
<dbReference type="Pfam" id="PF00187">
    <property type="entry name" value="Chitin_bind_1"/>
    <property type="match status" value="1"/>
</dbReference>
<dbReference type="Pfam" id="PF00182">
    <property type="entry name" value="Glyco_hydro_19"/>
    <property type="match status" value="2"/>
</dbReference>
<dbReference type="PIRSF" id="PIRSF001060">
    <property type="entry name" value="Endochitinase"/>
    <property type="match status" value="1"/>
</dbReference>
<dbReference type="PRINTS" id="PR00451">
    <property type="entry name" value="CHITINBINDNG"/>
</dbReference>
<dbReference type="SMART" id="SM00270">
    <property type="entry name" value="ChtBD1"/>
    <property type="match status" value="1"/>
</dbReference>
<dbReference type="SUPFAM" id="SSF53955">
    <property type="entry name" value="Lysozyme-like"/>
    <property type="match status" value="1"/>
</dbReference>
<dbReference type="SUPFAM" id="SSF57016">
    <property type="entry name" value="Plant lectins/antimicrobial peptides"/>
    <property type="match status" value="1"/>
</dbReference>
<dbReference type="PROSITE" id="PS00026">
    <property type="entry name" value="CHIT_BIND_I_1"/>
    <property type="match status" value="1"/>
</dbReference>
<dbReference type="PROSITE" id="PS50941">
    <property type="entry name" value="CHIT_BIND_I_2"/>
    <property type="match status" value="1"/>
</dbReference>
<dbReference type="PROSITE" id="PS00773">
    <property type="entry name" value="CHITINASE_19_1"/>
    <property type="match status" value="1"/>
</dbReference>
<dbReference type="PROSITE" id="PS00774">
    <property type="entry name" value="CHITINASE_19_2"/>
    <property type="match status" value="1"/>
</dbReference>
<feature type="signal peptide" evidence="2">
    <location>
        <begin position="1"/>
        <end position="24"/>
    </location>
</feature>
<feature type="chain" id="PRO_0000005291" description="Basic endochitinase CHB4">
    <location>
        <begin position="25"/>
        <end position="268"/>
    </location>
</feature>
<feature type="domain" description="Chitin-binding type-1" evidence="3">
    <location>
        <begin position="25"/>
        <end position="59"/>
    </location>
</feature>
<feature type="region of interest" description="Catalytic">
    <location>
        <begin position="71"/>
        <end position="268"/>
    </location>
</feature>
<feature type="active site" description="Proton donor" evidence="1">
    <location>
        <position position="132"/>
    </location>
</feature>
<feature type="glycosylation site" description="N-linked (GlcNAc...) asparagine" evidence="2">
    <location>
        <position position="265"/>
    </location>
</feature>
<feature type="disulfide bond" evidence="3">
    <location>
        <begin position="27"/>
        <end position="35"/>
    </location>
</feature>
<feature type="disulfide bond" evidence="3">
    <location>
        <begin position="29"/>
        <end position="41"/>
    </location>
</feature>
<feature type="disulfide bond" evidence="3">
    <location>
        <begin position="34"/>
        <end position="48"/>
    </location>
</feature>
<feature type="disulfide bond" evidence="3">
    <location>
        <begin position="52"/>
        <end position="57"/>
    </location>
</feature>
<feature type="disulfide bond" evidence="3">
    <location>
        <begin position="92"/>
        <end position="137"/>
    </location>
</feature>
<feature type="disulfide bond" evidence="3">
    <location>
        <begin position="150"/>
        <end position="159"/>
    </location>
</feature>
<feature type="disulfide bond" evidence="3">
    <location>
        <begin position="236"/>
        <end position="268"/>
    </location>
</feature>
<reference key="1">
    <citation type="journal article" date="1992" name="Plant Mol. Biol.">
        <title>Cloning and characterization of a pathogen-induced chitinase in Brassica napus.</title>
        <authorList>
            <person name="Rasmussen U."/>
            <person name="Bojsen K."/>
            <person name="Collinge D.B."/>
        </authorList>
    </citation>
    <scope>NUCLEOTIDE SEQUENCE [MRNA]</scope>
    <source>
        <strain>cv. Bienvenu</strain>
    </source>
</reference>
<reference key="2">
    <citation type="journal article" date="1992" name="Planta">
        <title>Induction and purification of chitinase in Brassica napus L. spp. oleifera infected with Phoma lingam.</title>
        <authorList>
            <person name="Rasmussen U."/>
            <person name="Giese H."/>
            <person name="Mikkelsen J.D."/>
        </authorList>
    </citation>
    <scope>PROTEIN SEQUENCE OF 101-115 AND 253-267</scope>
    <source>
        <strain>cv. Bienvenu</strain>
        <tissue>Cotyledon</tissue>
    </source>
</reference>
<evidence type="ECO:0000250" key="1">
    <source>
        <dbReference type="UniProtKB" id="P29022"/>
    </source>
</evidence>
<evidence type="ECO:0000255" key="2"/>
<evidence type="ECO:0000255" key="3">
    <source>
        <dbReference type="PROSITE-ProRule" id="PRU00261"/>
    </source>
</evidence>
<evidence type="ECO:0000305" key="4"/>
<name>CHI4_BRANA</name>
<keyword id="KW-0119">Carbohydrate metabolism</keyword>
<keyword id="KW-0146">Chitin degradation</keyword>
<keyword id="KW-0147">Chitin-binding</keyword>
<keyword id="KW-0903">Direct protein sequencing</keyword>
<keyword id="KW-1015">Disulfide bond</keyword>
<keyword id="KW-0325">Glycoprotein</keyword>
<keyword id="KW-0326">Glycosidase</keyword>
<keyword id="KW-0378">Hydrolase</keyword>
<keyword id="KW-0611">Plant defense</keyword>
<keyword id="KW-0624">Polysaccharide degradation</keyword>
<keyword id="KW-0964">Secreted</keyword>
<keyword id="KW-0732">Signal</keyword>
<sequence>MALTKLSLVLFLCFLGLYSETVKSQNCGCAPNLCCSQFGYCGSTDAYCGTGCRSGPCRSPGGTPSPPGGGSVGSIVTQAFFNGIINQAGGGCAGKNFYTRDSFINAANTFPNFANSVTRREIATMFAHFTHETGHFCYIEEINGASRDYCDENNRQYPCAPGKGYFGRGPIQLSWNYNYGACGQSLNLNLLGQPELVSSNPTVAFRTGLWFWMNSVRPVLNQGFGATIRAINGMECNGGNSGAVNARIRYYRDYCGQLGVDPGPNLSC</sequence>
<protein>
    <recommendedName>
        <fullName>Basic endochitinase CHB4</fullName>
        <ecNumber>3.2.1.14</ecNumber>
    </recommendedName>
</protein>